<dbReference type="EMBL" id="U10879">
    <property type="protein sequence ID" value="AAD10533.1"/>
    <property type="molecule type" value="Genomic_DNA"/>
</dbReference>
<dbReference type="EMBL" id="AL939111">
    <property type="protein sequence ID" value="CAB51991.1"/>
    <property type="molecule type" value="Genomic_DNA"/>
</dbReference>
<dbReference type="PIR" id="S60765">
    <property type="entry name" value="S60765"/>
</dbReference>
<dbReference type="RefSeq" id="NP_626341.1">
    <property type="nucleotide sequence ID" value="NC_003888.3"/>
</dbReference>
<dbReference type="RefSeq" id="WP_003976733.1">
    <property type="nucleotide sequence ID" value="NZ_VNID01000001.1"/>
</dbReference>
<dbReference type="SMR" id="P45500"/>
<dbReference type="FunCoup" id="P45500">
    <property type="interactions" value="270"/>
</dbReference>
<dbReference type="STRING" id="100226.gene:17759680"/>
<dbReference type="PaxDb" id="100226-SCO2082"/>
<dbReference type="GeneID" id="91386924"/>
<dbReference type="KEGG" id="sco:SCO2082"/>
<dbReference type="PATRIC" id="fig|100226.15.peg.2115"/>
<dbReference type="eggNOG" id="COG0206">
    <property type="taxonomic scope" value="Bacteria"/>
</dbReference>
<dbReference type="HOGENOM" id="CLU_024865_2_0_11"/>
<dbReference type="InParanoid" id="P45500"/>
<dbReference type="OrthoDB" id="9813375at2"/>
<dbReference type="PhylomeDB" id="P45500"/>
<dbReference type="Proteomes" id="UP000001973">
    <property type="component" value="Chromosome"/>
</dbReference>
<dbReference type="GO" id="GO:0032153">
    <property type="term" value="C:cell division site"/>
    <property type="evidence" value="ECO:0000318"/>
    <property type="project" value="GO_Central"/>
</dbReference>
<dbReference type="GO" id="GO:0005737">
    <property type="term" value="C:cytoplasm"/>
    <property type="evidence" value="ECO:0000318"/>
    <property type="project" value="GO_Central"/>
</dbReference>
<dbReference type="GO" id="GO:0000935">
    <property type="term" value="C:division septum"/>
    <property type="evidence" value="ECO:0000314"/>
    <property type="project" value="CACAO"/>
</dbReference>
<dbReference type="GO" id="GO:0005525">
    <property type="term" value="F:GTP binding"/>
    <property type="evidence" value="ECO:0000318"/>
    <property type="project" value="GO_Central"/>
</dbReference>
<dbReference type="GO" id="GO:0003924">
    <property type="term" value="F:GTPase activity"/>
    <property type="evidence" value="ECO:0000318"/>
    <property type="project" value="GO_Central"/>
</dbReference>
<dbReference type="GO" id="GO:0051301">
    <property type="term" value="P:cell division"/>
    <property type="evidence" value="ECO:0000318"/>
    <property type="project" value="GO_Central"/>
</dbReference>
<dbReference type="GO" id="GO:0090529">
    <property type="term" value="P:cell septum assembly"/>
    <property type="evidence" value="ECO:0000315"/>
    <property type="project" value="CACAO"/>
</dbReference>
<dbReference type="GO" id="GO:0000917">
    <property type="term" value="P:division septum assembly"/>
    <property type="evidence" value="ECO:0007669"/>
    <property type="project" value="UniProtKB-KW"/>
</dbReference>
<dbReference type="GO" id="GO:0043093">
    <property type="term" value="P:FtsZ-dependent cytokinesis"/>
    <property type="evidence" value="ECO:0007669"/>
    <property type="project" value="UniProtKB-UniRule"/>
</dbReference>
<dbReference type="GO" id="GO:0051258">
    <property type="term" value="P:protein polymerization"/>
    <property type="evidence" value="ECO:0007669"/>
    <property type="project" value="UniProtKB-UniRule"/>
</dbReference>
<dbReference type="CDD" id="cd02201">
    <property type="entry name" value="FtsZ_type1"/>
    <property type="match status" value="1"/>
</dbReference>
<dbReference type="FunFam" id="3.30.1330.20:FF:000005">
    <property type="entry name" value="Cell division protein FtsZ"/>
    <property type="match status" value="1"/>
</dbReference>
<dbReference type="FunFam" id="3.40.50.1440:FF:000023">
    <property type="entry name" value="Cell division protein FtsZ"/>
    <property type="match status" value="1"/>
</dbReference>
<dbReference type="Gene3D" id="3.30.1330.20">
    <property type="entry name" value="Tubulin/FtsZ, C-terminal domain"/>
    <property type="match status" value="1"/>
</dbReference>
<dbReference type="Gene3D" id="3.40.50.1440">
    <property type="entry name" value="Tubulin/FtsZ, GTPase domain"/>
    <property type="match status" value="1"/>
</dbReference>
<dbReference type="HAMAP" id="MF_00909">
    <property type="entry name" value="FtsZ"/>
    <property type="match status" value="1"/>
</dbReference>
<dbReference type="InterPro" id="IPR000158">
    <property type="entry name" value="Cell_div_FtsZ"/>
</dbReference>
<dbReference type="InterPro" id="IPR020805">
    <property type="entry name" value="Cell_div_FtsZ_CS"/>
</dbReference>
<dbReference type="InterPro" id="IPR045061">
    <property type="entry name" value="FtsZ/CetZ"/>
</dbReference>
<dbReference type="InterPro" id="IPR024757">
    <property type="entry name" value="FtsZ_C"/>
</dbReference>
<dbReference type="InterPro" id="IPR008280">
    <property type="entry name" value="Tub_FtsZ_C"/>
</dbReference>
<dbReference type="InterPro" id="IPR037103">
    <property type="entry name" value="Tubulin/FtsZ-like_C"/>
</dbReference>
<dbReference type="InterPro" id="IPR018316">
    <property type="entry name" value="Tubulin/FtsZ_2-layer-sand-dom"/>
</dbReference>
<dbReference type="InterPro" id="IPR036525">
    <property type="entry name" value="Tubulin/FtsZ_GTPase_sf"/>
</dbReference>
<dbReference type="InterPro" id="IPR003008">
    <property type="entry name" value="Tubulin_FtsZ_GTPase"/>
</dbReference>
<dbReference type="NCBIfam" id="TIGR00065">
    <property type="entry name" value="ftsZ"/>
    <property type="match status" value="1"/>
</dbReference>
<dbReference type="PANTHER" id="PTHR30314">
    <property type="entry name" value="CELL DIVISION PROTEIN FTSZ-RELATED"/>
    <property type="match status" value="1"/>
</dbReference>
<dbReference type="PANTHER" id="PTHR30314:SF3">
    <property type="entry name" value="MITOCHONDRIAL DIVISION PROTEIN FSZA"/>
    <property type="match status" value="1"/>
</dbReference>
<dbReference type="Pfam" id="PF12327">
    <property type="entry name" value="FtsZ_C"/>
    <property type="match status" value="1"/>
</dbReference>
<dbReference type="Pfam" id="PF00091">
    <property type="entry name" value="Tubulin"/>
    <property type="match status" value="1"/>
</dbReference>
<dbReference type="PRINTS" id="PR00423">
    <property type="entry name" value="CELLDVISFTSZ"/>
</dbReference>
<dbReference type="SMART" id="SM00864">
    <property type="entry name" value="Tubulin"/>
    <property type="match status" value="1"/>
</dbReference>
<dbReference type="SMART" id="SM00865">
    <property type="entry name" value="Tubulin_C"/>
    <property type="match status" value="1"/>
</dbReference>
<dbReference type="SUPFAM" id="SSF55307">
    <property type="entry name" value="Tubulin C-terminal domain-like"/>
    <property type="match status" value="1"/>
</dbReference>
<dbReference type="SUPFAM" id="SSF52490">
    <property type="entry name" value="Tubulin nucleotide-binding domain-like"/>
    <property type="match status" value="1"/>
</dbReference>
<dbReference type="PROSITE" id="PS01134">
    <property type="entry name" value="FTSZ_1"/>
    <property type="match status" value="1"/>
</dbReference>
<dbReference type="PROSITE" id="PS01135">
    <property type="entry name" value="FTSZ_2"/>
    <property type="match status" value="1"/>
</dbReference>
<sequence length="399" mass="41095">MAAPQNYLAVIKVIGVGGGGVNAINRMIEVGLKGVEFIAINTDAQALLMSDADVKLDVGRELTRGLGAGANPAVGRKAAEDHREEIEEVLKGADMVFVTAGEGGGTGTGGAPVVANIARSLGALTIGVVTRPFTFEGRRRANQAEDGIAELREEVDTLIVIPNDRLLSISDRQVSVLDAFKSADQVLLSGVQGITDLITTPGLINLDFADVKSVMSEAGSALMGIGSARGDDRAVAAAEMAISSPLLEASIDGARGVLLSISGGSDLGLFEINEAAQLVSEAAHPEANIIFGAVIDDALGDEVRVTVIAAGFDGGQPPSKRDNVLGSSSAKREEPTPARPSESRPSFGSLGSVKPKEEPEPAPVPEPVADLPVSPPPVPPSRTYSDSAAEELDVPDFLK</sequence>
<name>FTSZ_STRCO</name>
<keyword id="KW-0131">Cell cycle</keyword>
<keyword id="KW-0132">Cell division</keyword>
<keyword id="KW-0963">Cytoplasm</keyword>
<keyword id="KW-0342">GTP-binding</keyword>
<keyword id="KW-0547">Nucleotide-binding</keyword>
<keyword id="KW-1185">Reference proteome</keyword>
<keyword id="KW-0717">Septation</keyword>
<proteinExistence type="inferred from homology"/>
<gene>
    <name evidence="1" type="primary">ftsZ</name>
    <name type="ordered locus">SCO2082</name>
    <name type="ORF">SC4A10.15c</name>
</gene>
<comment type="function">
    <text evidence="1">Essential cell division protein that forms a contractile ring structure (Z ring) at the future cell division site. The regulation of the ring assembly controls the timing and the location of cell division. One of the functions of the FtsZ ring is to recruit other cell division proteins to the septum to produce a new cell wall between the dividing cells. Binds GTP and shows GTPase activity.</text>
</comment>
<comment type="subunit">
    <text evidence="1">Homodimer. Polymerizes to form a dynamic ring structure in a strictly GTP-dependent manner. Interacts directly with several other division proteins.</text>
</comment>
<comment type="subcellular location">
    <subcellularLocation>
        <location evidence="1">Cytoplasm</location>
    </subcellularLocation>
    <text evidence="1">Assembles at midcell at the inner surface of the cytoplasmic membrane.</text>
</comment>
<comment type="similarity">
    <text evidence="1">Belongs to the FtsZ family.</text>
</comment>
<reference key="1">
    <citation type="journal article" date="1994" name="Mol. Microbiol.">
        <title>Growth and viability of Streptomyces coelicolor mutant for the cell division gene ftsZ.</title>
        <authorList>
            <person name="McCormick J.R."/>
            <person name="Su E.P."/>
            <person name="Driks A."/>
            <person name="Losick R."/>
        </authorList>
    </citation>
    <scope>NUCLEOTIDE SEQUENCE [GENOMIC DNA]</scope>
    <source>
        <strain>A3(2) / NRRL B-16638</strain>
    </source>
</reference>
<reference key="2">
    <citation type="journal article" date="2002" name="Nature">
        <title>Complete genome sequence of the model actinomycete Streptomyces coelicolor A3(2).</title>
        <authorList>
            <person name="Bentley S.D."/>
            <person name="Chater K.F."/>
            <person name="Cerdeno-Tarraga A.-M."/>
            <person name="Challis G.L."/>
            <person name="Thomson N.R."/>
            <person name="James K.D."/>
            <person name="Harris D.E."/>
            <person name="Quail M.A."/>
            <person name="Kieser H."/>
            <person name="Harper D."/>
            <person name="Bateman A."/>
            <person name="Brown S."/>
            <person name="Chandra G."/>
            <person name="Chen C.W."/>
            <person name="Collins M."/>
            <person name="Cronin A."/>
            <person name="Fraser A."/>
            <person name="Goble A."/>
            <person name="Hidalgo J."/>
            <person name="Hornsby T."/>
            <person name="Howarth S."/>
            <person name="Huang C.-H."/>
            <person name="Kieser T."/>
            <person name="Larke L."/>
            <person name="Murphy L.D."/>
            <person name="Oliver K."/>
            <person name="O'Neil S."/>
            <person name="Rabbinowitsch E."/>
            <person name="Rajandream M.A."/>
            <person name="Rutherford K.M."/>
            <person name="Rutter S."/>
            <person name="Seeger K."/>
            <person name="Saunders D."/>
            <person name="Sharp S."/>
            <person name="Squares R."/>
            <person name="Squares S."/>
            <person name="Taylor K."/>
            <person name="Warren T."/>
            <person name="Wietzorrek A."/>
            <person name="Woodward J.R."/>
            <person name="Barrell B.G."/>
            <person name="Parkhill J."/>
            <person name="Hopwood D.A."/>
        </authorList>
    </citation>
    <scope>NUCLEOTIDE SEQUENCE [LARGE SCALE GENOMIC DNA]</scope>
    <source>
        <strain>ATCC BAA-471 / A3(2) / M145</strain>
    </source>
</reference>
<organism>
    <name type="scientific">Streptomyces coelicolor (strain ATCC BAA-471 / A3(2) / M145)</name>
    <dbReference type="NCBI Taxonomy" id="100226"/>
    <lineage>
        <taxon>Bacteria</taxon>
        <taxon>Bacillati</taxon>
        <taxon>Actinomycetota</taxon>
        <taxon>Actinomycetes</taxon>
        <taxon>Kitasatosporales</taxon>
        <taxon>Streptomycetaceae</taxon>
        <taxon>Streptomyces</taxon>
        <taxon>Streptomyces albidoflavus group</taxon>
    </lineage>
</organism>
<evidence type="ECO:0000255" key="1">
    <source>
        <dbReference type="HAMAP-Rule" id="MF_00909"/>
    </source>
</evidence>
<evidence type="ECO:0000256" key="2">
    <source>
        <dbReference type="SAM" id="MobiDB-lite"/>
    </source>
</evidence>
<accession>P45500</accession>
<feature type="chain" id="PRO_0000114388" description="Cell division protein FtsZ">
    <location>
        <begin position="1"/>
        <end position="399"/>
    </location>
</feature>
<feature type="region of interest" description="Disordered" evidence="2">
    <location>
        <begin position="311"/>
        <end position="399"/>
    </location>
</feature>
<feature type="compositionally biased region" description="Acidic residues" evidence="2">
    <location>
        <begin position="388"/>
        <end position="399"/>
    </location>
</feature>
<feature type="binding site" evidence="1">
    <location>
        <begin position="18"/>
        <end position="22"/>
    </location>
    <ligand>
        <name>GTP</name>
        <dbReference type="ChEBI" id="CHEBI:37565"/>
    </ligand>
</feature>
<feature type="binding site" evidence="1">
    <location>
        <begin position="105"/>
        <end position="107"/>
    </location>
    <ligand>
        <name>GTP</name>
        <dbReference type="ChEBI" id="CHEBI:37565"/>
    </ligand>
</feature>
<feature type="binding site" evidence="1">
    <location>
        <position position="136"/>
    </location>
    <ligand>
        <name>GTP</name>
        <dbReference type="ChEBI" id="CHEBI:37565"/>
    </ligand>
</feature>
<feature type="binding site" evidence="1">
    <location>
        <position position="140"/>
    </location>
    <ligand>
        <name>GTP</name>
        <dbReference type="ChEBI" id="CHEBI:37565"/>
    </ligand>
</feature>
<feature type="binding site" evidence="1">
    <location>
        <position position="184"/>
    </location>
    <ligand>
        <name>GTP</name>
        <dbReference type="ChEBI" id="CHEBI:37565"/>
    </ligand>
</feature>
<protein>
    <recommendedName>
        <fullName evidence="1">Cell division protein FtsZ</fullName>
    </recommendedName>
</protein>